<comment type="similarity">
    <text evidence="1">Belongs to the bacterial ribosomal protein bS16 family.</text>
</comment>
<reference key="1">
    <citation type="submission" date="2006-03" db="EMBL/GenBank/DDBJ databases">
        <title>Complete sequence of chromosome of Psychrobacter cryohalolentis K5.</title>
        <authorList>
            <consortium name="US DOE Joint Genome Institute"/>
            <person name="Copeland A."/>
            <person name="Lucas S."/>
            <person name="Lapidus A."/>
            <person name="Barry K."/>
            <person name="Detter J.C."/>
            <person name="Glavina T."/>
            <person name="Hammon N."/>
            <person name="Israni S."/>
            <person name="Dalin E."/>
            <person name="Tice H."/>
            <person name="Pitluck S."/>
            <person name="Brettin T."/>
            <person name="Bruce D."/>
            <person name="Han C."/>
            <person name="Tapia R."/>
            <person name="Sims D.R."/>
            <person name="Gilna P."/>
            <person name="Schmutz J."/>
            <person name="Larimer F."/>
            <person name="Land M."/>
            <person name="Hauser L."/>
            <person name="Kyrpides N."/>
            <person name="Kim E."/>
            <person name="Richardson P."/>
        </authorList>
    </citation>
    <scope>NUCLEOTIDE SEQUENCE [LARGE SCALE GENOMIC DNA]</scope>
    <source>
        <strain>ATCC BAA-1226 / DSM 17306 / VKM B-2378 / K5</strain>
    </source>
</reference>
<organism>
    <name type="scientific">Psychrobacter cryohalolentis (strain ATCC BAA-1226 / DSM 17306 / VKM B-2378 / K5)</name>
    <dbReference type="NCBI Taxonomy" id="335284"/>
    <lineage>
        <taxon>Bacteria</taxon>
        <taxon>Pseudomonadati</taxon>
        <taxon>Pseudomonadota</taxon>
        <taxon>Gammaproteobacteria</taxon>
        <taxon>Moraxellales</taxon>
        <taxon>Moraxellaceae</taxon>
        <taxon>Psychrobacter</taxon>
    </lineage>
</organism>
<proteinExistence type="inferred from homology"/>
<feature type="chain" id="PRO_0000243854" description="Small ribosomal subunit protein bS16">
    <location>
        <begin position="1"/>
        <end position="89"/>
    </location>
</feature>
<keyword id="KW-0687">Ribonucleoprotein</keyword>
<keyword id="KW-0689">Ribosomal protein</keyword>
<gene>
    <name evidence="1" type="primary">rpsP</name>
    <name type="ordered locus">Pcryo_2322</name>
</gene>
<dbReference type="EMBL" id="CP000323">
    <property type="protein sequence ID" value="ABE76099.1"/>
    <property type="molecule type" value="Genomic_DNA"/>
</dbReference>
<dbReference type="RefSeq" id="WP_011281274.1">
    <property type="nucleotide sequence ID" value="NC_007969.1"/>
</dbReference>
<dbReference type="SMR" id="Q1Q8A4"/>
<dbReference type="STRING" id="335284.Pcryo_2322"/>
<dbReference type="KEGG" id="pcr:Pcryo_2322"/>
<dbReference type="eggNOG" id="COG0228">
    <property type="taxonomic scope" value="Bacteria"/>
</dbReference>
<dbReference type="HOGENOM" id="CLU_100590_5_1_6"/>
<dbReference type="Proteomes" id="UP000002425">
    <property type="component" value="Chromosome"/>
</dbReference>
<dbReference type="GO" id="GO:0005737">
    <property type="term" value="C:cytoplasm"/>
    <property type="evidence" value="ECO:0007669"/>
    <property type="project" value="UniProtKB-ARBA"/>
</dbReference>
<dbReference type="GO" id="GO:0015935">
    <property type="term" value="C:small ribosomal subunit"/>
    <property type="evidence" value="ECO:0007669"/>
    <property type="project" value="TreeGrafter"/>
</dbReference>
<dbReference type="GO" id="GO:0003735">
    <property type="term" value="F:structural constituent of ribosome"/>
    <property type="evidence" value="ECO:0007669"/>
    <property type="project" value="InterPro"/>
</dbReference>
<dbReference type="GO" id="GO:0006412">
    <property type="term" value="P:translation"/>
    <property type="evidence" value="ECO:0007669"/>
    <property type="project" value="UniProtKB-UniRule"/>
</dbReference>
<dbReference type="Gene3D" id="3.30.1320.10">
    <property type="match status" value="1"/>
</dbReference>
<dbReference type="HAMAP" id="MF_00385">
    <property type="entry name" value="Ribosomal_bS16"/>
    <property type="match status" value="1"/>
</dbReference>
<dbReference type="InterPro" id="IPR000307">
    <property type="entry name" value="Ribosomal_bS16"/>
</dbReference>
<dbReference type="InterPro" id="IPR020592">
    <property type="entry name" value="Ribosomal_bS16_CS"/>
</dbReference>
<dbReference type="InterPro" id="IPR023803">
    <property type="entry name" value="Ribosomal_bS16_dom_sf"/>
</dbReference>
<dbReference type="NCBIfam" id="TIGR00002">
    <property type="entry name" value="S16"/>
    <property type="match status" value="1"/>
</dbReference>
<dbReference type="PANTHER" id="PTHR12919">
    <property type="entry name" value="30S RIBOSOMAL PROTEIN S16"/>
    <property type="match status" value="1"/>
</dbReference>
<dbReference type="PANTHER" id="PTHR12919:SF20">
    <property type="entry name" value="SMALL RIBOSOMAL SUBUNIT PROTEIN BS16M"/>
    <property type="match status" value="1"/>
</dbReference>
<dbReference type="Pfam" id="PF00886">
    <property type="entry name" value="Ribosomal_S16"/>
    <property type="match status" value="1"/>
</dbReference>
<dbReference type="SUPFAM" id="SSF54565">
    <property type="entry name" value="Ribosomal protein S16"/>
    <property type="match status" value="1"/>
</dbReference>
<dbReference type="PROSITE" id="PS00732">
    <property type="entry name" value="RIBOSOMAL_S16"/>
    <property type="match status" value="1"/>
</dbReference>
<evidence type="ECO:0000255" key="1">
    <source>
        <dbReference type="HAMAP-Rule" id="MF_00385"/>
    </source>
</evidence>
<evidence type="ECO:0000305" key="2"/>
<sequence>MVVIRLARGGAKKRPFYQVVVADQRRARDGRYIENIGFFNPLAKDSEEAVRLNMEAYNAWVAKGAQPSDRVASLAKAYNKSAAQTEATA</sequence>
<protein>
    <recommendedName>
        <fullName evidence="1">Small ribosomal subunit protein bS16</fullName>
    </recommendedName>
    <alternativeName>
        <fullName evidence="2">30S ribosomal protein S16</fullName>
    </alternativeName>
</protein>
<accession>Q1Q8A4</accession>
<name>RS16_PSYCK</name>